<accession>Q2TBR7</accession>
<gene>
    <name type="primary">CENPS</name>
    <name type="synonym">APITD1</name>
    <name type="synonym">FAAP16</name>
    <name type="synonym">MHF1</name>
</gene>
<reference key="1">
    <citation type="submission" date="2005-11" db="EMBL/GenBank/DDBJ databases">
        <authorList>
            <consortium name="NIH - Mammalian Gene Collection (MGC) project"/>
        </authorList>
    </citation>
    <scope>NUCLEOTIDE SEQUENCE [LARGE SCALE MRNA]</scope>
    <source>
        <strain>Crossbred X Angus</strain>
        <tissue>Liver</tissue>
    </source>
</reference>
<protein>
    <recommendedName>
        <fullName>Centromere protein S</fullName>
        <shortName>CENP-S</shortName>
    </recommendedName>
    <alternativeName>
        <fullName>Apoptosis-inducing TAF9-like domain-containing protein 1 homolog</fullName>
    </alternativeName>
    <alternativeName>
        <fullName>FANCM-interacting histone fold protein 1</fullName>
    </alternativeName>
</protein>
<sequence length="138" mass="15951">MEEEEWSEEQQRFSYLQRLKAAVHYTVGCLCEEVASDKDMQFSKQTIAAISEVTFGQCENFAKDLEMFARHAKRSTINTEDVKLLARRSHSLLKYITEKNEDIAQLNLEKKAKKKKKLEDENRNSVESAEAGVEESEN</sequence>
<evidence type="ECO:0000250" key="1">
    <source>
        <dbReference type="UniProtKB" id="Q8N2Z9"/>
    </source>
</evidence>
<evidence type="ECO:0000256" key="2">
    <source>
        <dbReference type="SAM" id="MobiDB-lite"/>
    </source>
</evidence>
<evidence type="ECO:0000305" key="3"/>
<organism>
    <name type="scientific">Bos taurus</name>
    <name type="common">Bovine</name>
    <dbReference type="NCBI Taxonomy" id="9913"/>
    <lineage>
        <taxon>Eukaryota</taxon>
        <taxon>Metazoa</taxon>
        <taxon>Chordata</taxon>
        <taxon>Craniata</taxon>
        <taxon>Vertebrata</taxon>
        <taxon>Euteleostomi</taxon>
        <taxon>Mammalia</taxon>
        <taxon>Eutheria</taxon>
        <taxon>Laurasiatheria</taxon>
        <taxon>Artiodactyla</taxon>
        <taxon>Ruminantia</taxon>
        <taxon>Pecora</taxon>
        <taxon>Bovidae</taxon>
        <taxon>Bovinae</taxon>
        <taxon>Bos</taxon>
    </lineage>
</organism>
<comment type="function">
    <text evidence="1">DNA-binding component of the Fanconi anemia (FA) core complex. Required for the normal activation of the FA pathway, leading to monoubiquitination of the FANCI-FANCD2 complex in response to DNA damage, cellular resistance to DNA cross-linking drugs, and prevention of chromosomal breakage. In complex with CENPX (MHF heterodimer), crucial cofactor for FANCM in both binding and ATP-dependent remodeling of DNA. Stabilizes FANCM. In complex with CENPX and FANCM (but not other FANC proteins), rapidly recruited to blocked forks and promotes gene conversion at blocked replication forks. In complex with CENPT, CENPW and CENPX (CENP-T-W-S-X heterotetramer), involved in the formation of a functional kinetochore outer plate, which is essential for kinetochore-microtubule attachment and faithful mitotic progression. As a component of MHF and CENP-T-W-S-X complexes, binds DNA and bends it to form a nucleosome-like structure. DNA-binding function is fulfilled in the presence of CENPX, with the following preference for DNA substates: Holliday junction &gt; double-stranded &gt; splay arm &gt; single-stranded. Does not bind DNA on its own.</text>
</comment>
<comment type="subunit">
    <text evidence="1">Heterodimer with CENPX, sometimes called MHF; this interaction stabilizes both partners. MHF heterodimers can assemble to form tetrameric structures. MHF also coassemble with CENPT-CENPW heterodimers at centromeres to form the tetrameric CENP-T-W-S-X complex. Forms a discrete complex with FANCM and CENPX, called FANCM-MHF; this interaction, probably mediated by direct binding between CENPS and FANCM, leads to synergistic activation of double-stranded DNA binding and strongly stimulates FANCM-mediated DNA remodeling. Recruited by FANCM to the Fanconi anemia (FA) core complex, which consists of CENPS, CENPX, FANCA, FANCB, FANCC, FANCE, FANCF, FANCG, FANCL, FANCM, FAAP24 and FAAP100. The FA core complex associates with Bloom syndrome (BLM) complex, which consists of at least BLM, DNA topoisomerase 3-alpha (TOP3A), RMI1/BLAP75, RPA1/RPA70 and RPA2/RPA32. The super complex between FA and BLM is called BRAFT. Component of the CENPA-CAD complex, composed of CENPI, CENPK, CENPL, CENPO, CENPP, CENPQ, CENPR and CENPS. The CENPA-CAD complex is probably recruited on centromeres by the CENPA-NAC complex, at least composed of CENPA, CENPC, CENPH, CENPM, CENPN, CENPT and CENPU.</text>
</comment>
<comment type="subcellular location">
    <subcellularLocation>
        <location evidence="1">Nucleus</location>
    </subcellularLocation>
    <subcellularLocation>
        <location evidence="1">Chromosome</location>
        <location evidence="1">Centromere</location>
    </subcellularLocation>
    <subcellularLocation>
        <location evidence="1">Chromosome</location>
        <location evidence="1">Centromere</location>
        <location evidence="1">Kinetochore</location>
    </subcellularLocation>
    <text evidence="1">Assembly of CENPS and CENPX and its partner subunits CENPT and CENPW at centromeres occurs through a dynamic exchange mechanism. Although exchange is continuous in the cell cycle, de novo assembly starts principally during mid-late S phase and is complete by G2. CENPS is more stably bound at the kinetochore than CENPX. During S phase, rapidly recruited to DNA interstrand cross-links that block replication. Recruited to DNA damage sites about 20 minutes following UV irradiation, reaching a plateau after approximately 40 minutes.</text>
</comment>
<comment type="similarity">
    <text evidence="3">Belongs to the TAF9 family. CENP-S/MHF1 subfamily.</text>
</comment>
<proteinExistence type="evidence at transcript level"/>
<feature type="chain" id="PRO_0000249476" description="Centromere protein S">
    <location>
        <begin position="1"/>
        <end position="138"/>
    </location>
</feature>
<feature type="region of interest" description="Disordered" evidence="2">
    <location>
        <begin position="112"/>
        <end position="138"/>
    </location>
</feature>
<feature type="modified residue" description="N-acetylmethionine" evidence="1">
    <location>
        <position position="1"/>
    </location>
</feature>
<dbReference type="EMBL" id="BC109754">
    <property type="protein sequence ID" value="AAI09755.1"/>
    <property type="molecule type" value="mRNA"/>
</dbReference>
<dbReference type="RefSeq" id="NP_001033665.1">
    <property type="nucleotide sequence ID" value="NM_001038576.2"/>
</dbReference>
<dbReference type="SMR" id="Q2TBR7"/>
<dbReference type="FunCoup" id="Q2TBR7">
    <property type="interactions" value="783"/>
</dbReference>
<dbReference type="STRING" id="9913.ENSBTAP00000017996"/>
<dbReference type="PaxDb" id="9913-ENSBTAP00000017996"/>
<dbReference type="GeneID" id="613732"/>
<dbReference type="KEGG" id="bta:613732"/>
<dbReference type="CTD" id="378708"/>
<dbReference type="VEuPathDB" id="HostDB:ENSBTAG00000013531"/>
<dbReference type="eggNOG" id="ENOG502S62X">
    <property type="taxonomic scope" value="Eukaryota"/>
</dbReference>
<dbReference type="HOGENOM" id="CLU_100369_0_0_1"/>
<dbReference type="InParanoid" id="Q2TBR7"/>
<dbReference type="OMA" id="WTQIENV"/>
<dbReference type="OrthoDB" id="1872155at2759"/>
<dbReference type="TreeFam" id="TF300253"/>
<dbReference type="Reactome" id="R-BTA-141444">
    <property type="pathway name" value="Amplification of signal from unattached kinetochores via a MAD2 inhibitory signal"/>
</dbReference>
<dbReference type="Reactome" id="R-BTA-2467813">
    <property type="pathway name" value="Separation of Sister Chromatids"/>
</dbReference>
<dbReference type="Reactome" id="R-BTA-2500257">
    <property type="pathway name" value="Resolution of Sister Chromatid Cohesion"/>
</dbReference>
<dbReference type="Reactome" id="R-BTA-5663220">
    <property type="pathway name" value="RHO GTPases Activate Formins"/>
</dbReference>
<dbReference type="Reactome" id="R-BTA-606279">
    <property type="pathway name" value="Deposition of new CENPA-containing nucleosomes at the centromere"/>
</dbReference>
<dbReference type="Reactome" id="R-BTA-6783310">
    <property type="pathway name" value="Fanconi Anemia Pathway"/>
</dbReference>
<dbReference type="Reactome" id="R-BTA-68877">
    <property type="pathway name" value="Mitotic Prometaphase"/>
</dbReference>
<dbReference type="Reactome" id="R-BTA-9648025">
    <property type="pathway name" value="EML4 and NUDC in mitotic spindle formation"/>
</dbReference>
<dbReference type="Reactome" id="R-BTA-9833482">
    <property type="pathway name" value="PKR-mediated signaling"/>
</dbReference>
<dbReference type="Proteomes" id="UP000009136">
    <property type="component" value="Chromosome 16"/>
</dbReference>
<dbReference type="Bgee" id="ENSBTAG00000013531">
    <property type="expression patterns" value="Expressed in thyroid gland and 102 other cell types or tissues"/>
</dbReference>
<dbReference type="GO" id="GO:0071821">
    <property type="term" value="C:FANCM-MHF complex"/>
    <property type="evidence" value="ECO:0000250"/>
    <property type="project" value="UniProtKB"/>
</dbReference>
<dbReference type="GO" id="GO:0043240">
    <property type="term" value="C:Fanconi anaemia nuclear complex"/>
    <property type="evidence" value="ECO:0000250"/>
    <property type="project" value="UniProtKB"/>
</dbReference>
<dbReference type="GO" id="GO:0000776">
    <property type="term" value="C:kinetochore"/>
    <property type="evidence" value="ECO:0007669"/>
    <property type="project" value="UniProtKB-KW"/>
</dbReference>
<dbReference type="GO" id="GO:0003682">
    <property type="term" value="F:chromatin binding"/>
    <property type="evidence" value="ECO:0000250"/>
    <property type="project" value="UniProtKB"/>
</dbReference>
<dbReference type="GO" id="GO:0003677">
    <property type="term" value="F:DNA binding"/>
    <property type="evidence" value="ECO:0000250"/>
    <property type="project" value="UniProtKB"/>
</dbReference>
<dbReference type="GO" id="GO:0046982">
    <property type="term" value="F:protein heterodimerization activity"/>
    <property type="evidence" value="ECO:0007669"/>
    <property type="project" value="InterPro"/>
</dbReference>
<dbReference type="GO" id="GO:0051301">
    <property type="term" value="P:cell division"/>
    <property type="evidence" value="ECO:0007669"/>
    <property type="project" value="UniProtKB-KW"/>
</dbReference>
<dbReference type="GO" id="GO:0006974">
    <property type="term" value="P:DNA damage response"/>
    <property type="evidence" value="ECO:0000250"/>
    <property type="project" value="UniProtKB"/>
</dbReference>
<dbReference type="GO" id="GO:0006281">
    <property type="term" value="P:DNA repair"/>
    <property type="evidence" value="ECO:0000250"/>
    <property type="project" value="UniProtKB"/>
</dbReference>
<dbReference type="GO" id="GO:0031297">
    <property type="term" value="P:replication fork processing"/>
    <property type="evidence" value="ECO:0000250"/>
    <property type="project" value="UniProtKB"/>
</dbReference>
<dbReference type="GO" id="GO:0000712">
    <property type="term" value="P:resolution of meiotic recombination intermediates"/>
    <property type="evidence" value="ECO:0000250"/>
    <property type="project" value="UniProtKB"/>
</dbReference>
<dbReference type="CDD" id="cd22919">
    <property type="entry name" value="HFD_CENP-S"/>
    <property type="match status" value="1"/>
</dbReference>
<dbReference type="FunFam" id="1.10.20.10:FF:000063">
    <property type="entry name" value="Centromere protein S"/>
    <property type="match status" value="1"/>
</dbReference>
<dbReference type="Gene3D" id="1.10.20.10">
    <property type="entry name" value="Histone, subunit A"/>
    <property type="match status" value="1"/>
</dbReference>
<dbReference type="InterPro" id="IPR029003">
    <property type="entry name" value="CENP-S/Mhf1"/>
</dbReference>
<dbReference type="InterPro" id="IPR009072">
    <property type="entry name" value="Histone-fold"/>
</dbReference>
<dbReference type="PANTHER" id="PTHR22980:SF0">
    <property type="entry name" value="CENTROMERE PROTEIN S"/>
    <property type="match status" value="1"/>
</dbReference>
<dbReference type="PANTHER" id="PTHR22980">
    <property type="entry name" value="CORTISTATIN"/>
    <property type="match status" value="1"/>
</dbReference>
<dbReference type="Pfam" id="PF15630">
    <property type="entry name" value="CENP-S"/>
    <property type="match status" value="1"/>
</dbReference>
<dbReference type="SUPFAM" id="SSF47113">
    <property type="entry name" value="Histone-fold"/>
    <property type="match status" value="1"/>
</dbReference>
<name>CENPS_BOVIN</name>
<keyword id="KW-0007">Acetylation</keyword>
<keyword id="KW-0131">Cell cycle</keyword>
<keyword id="KW-0132">Cell division</keyword>
<keyword id="KW-0137">Centromere</keyword>
<keyword id="KW-0158">Chromosome</keyword>
<keyword id="KW-0227">DNA damage</keyword>
<keyword id="KW-0234">DNA repair</keyword>
<keyword id="KW-0238">DNA-binding</keyword>
<keyword id="KW-0995">Kinetochore</keyword>
<keyword id="KW-0498">Mitosis</keyword>
<keyword id="KW-0539">Nucleus</keyword>
<keyword id="KW-1185">Reference proteome</keyword>